<comment type="function">
    <text evidence="1">Transfers the gamma-phosphate of ATP to the 4'-position of a tetraacyldisaccharide 1-phosphate intermediate (termed DS-1-P) to form tetraacyldisaccharide 1,4'-bis-phosphate (lipid IVA).</text>
</comment>
<comment type="catalytic activity">
    <reaction evidence="1">
        <text>a lipid A disaccharide + ATP = a lipid IVA + ADP + H(+)</text>
        <dbReference type="Rhea" id="RHEA:67840"/>
        <dbReference type="ChEBI" id="CHEBI:15378"/>
        <dbReference type="ChEBI" id="CHEBI:30616"/>
        <dbReference type="ChEBI" id="CHEBI:176343"/>
        <dbReference type="ChEBI" id="CHEBI:176425"/>
        <dbReference type="ChEBI" id="CHEBI:456216"/>
        <dbReference type="EC" id="2.7.1.130"/>
    </reaction>
</comment>
<comment type="pathway">
    <text evidence="1">Glycolipid biosynthesis; lipid IV(A) biosynthesis; lipid IV(A) from (3R)-3-hydroxytetradecanoyl-[acyl-carrier-protein] and UDP-N-acetyl-alpha-D-glucosamine: step 6/6.</text>
</comment>
<comment type="similarity">
    <text evidence="1">Belongs to the LpxK family.</text>
</comment>
<dbReference type="EC" id="2.7.1.130" evidence="1"/>
<dbReference type="EMBL" id="CP000786">
    <property type="protein sequence ID" value="ABZ97064.1"/>
    <property type="molecule type" value="Genomic_DNA"/>
</dbReference>
<dbReference type="RefSeq" id="WP_012387947.1">
    <property type="nucleotide sequence ID" value="NC_010602.1"/>
</dbReference>
<dbReference type="SMR" id="B0SMC0"/>
<dbReference type="STRING" id="456481.LEPBI_I0940"/>
<dbReference type="KEGG" id="lbi:LEPBI_I0940"/>
<dbReference type="HOGENOM" id="CLU_038816_6_0_12"/>
<dbReference type="OrthoDB" id="9789797at2"/>
<dbReference type="BioCyc" id="LBIF456481:LEPBI_RS04610-MONOMER"/>
<dbReference type="UniPathway" id="UPA00359">
    <property type="reaction ID" value="UER00482"/>
</dbReference>
<dbReference type="Proteomes" id="UP000001847">
    <property type="component" value="Chromosome I"/>
</dbReference>
<dbReference type="GO" id="GO:0005886">
    <property type="term" value="C:plasma membrane"/>
    <property type="evidence" value="ECO:0007669"/>
    <property type="project" value="TreeGrafter"/>
</dbReference>
<dbReference type="GO" id="GO:0005524">
    <property type="term" value="F:ATP binding"/>
    <property type="evidence" value="ECO:0007669"/>
    <property type="project" value="UniProtKB-UniRule"/>
</dbReference>
<dbReference type="GO" id="GO:0009029">
    <property type="term" value="F:tetraacyldisaccharide 4'-kinase activity"/>
    <property type="evidence" value="ECO:0007669"/>
    <property type="project" value="UniProtKB-UniRule"/>
</dbReference>
<dbReference type="GO" id="GO:0009245">
    <property type="term" value="P:lipid A biosynthetic process"/>
    <property type="evidence" value="ECO:0007669"/>
    <property type="project" value="UniProtKB-UniRule"/>
</dbReference>
<dbReference type="GO" id="GO:0009244">
    <property type="term" value="P:lipopolysaccharide core region biosynthetic process"/>
    <property type="evidence" value="ECO:0007669"/>
    <property type="project" value="TreeGrafter"/>
</dbReference>
<dbReference type="HAMAP" id="MF_00409">
    <property type="entry name" value="LpxK"/>
    <property type="match status" value="1"/>
</dbReference>
<dbReference type="InterPro" id="IPR003758">
    <property type="entry name" value="LpxK"/>
</dbReference>
<dbReference type="NCBIfam" id="TIGR00682">
    <property type="entry name" value="lpxK"/>
    <property type="match status" value="1"/>
</dbReference>
<dbReference type="PANTHER" id="PTHR42724">
    <property type="entry name" value="TETRAACYLDISACCHARIDE 4'-KINASE"/>
    <property type="match status" value="1"/>
</dbReference>
<dbReference type="PANTHER" id="PTHR42724:SF1">
    <property type="entry name" value="TETRAACYLDISACCHARIDE 4'-KINASE, MITOCHONDRIAL-RELATED"/>
    <property type="match status" value="1"/>
</dbReference>
<dbReference type="Pfam" id="PF02606">
    <property type="entry name" value="LpxK"/>
    <property type="match status" value="1"/>
</dbReference>
<sequence>MKFFFILFYPLSLLYQFLFWVSQFKIKPFVLPHVLVISVGNVTMGGTGKTPFVQYLVRYFKAKNKKYAITILSRGYKAKLSKVGAILRDGLSPHLYGDEPSEHKELFPDVQVIIGKNRKESFLKHNQIHSKFHIVILDDGFQHKQIHRDFDIVLLDANGPFGNGQTIPLGFLREPISHLRRAHTIVFTKLTDQNKDKSIRAINILKQKQIPVPSYTSHFLANLVQIDLNTLKSNPVQLPVDQIRQTKVLDEDANDGYFLFTGVGNPKHVLETAESIIGKKINQHRFFPDHYEFEESVLGSIIGEVKQGTVLLTTEKDWVKVRTKKGFLEELKKRNIQIFVIKIEVVVNEKESFESMLAGLVSTYEAKNDLVSMN</sequence>
<organism>
    <name type="scientific">Leptospira biflexa serovar Patoc (strain Patoc 1 / ATCC 23582 / Paris)</name>
    <dbReference type="NCBI Taxonomy" id="456481"/>
    <lineage>
        <taxon>Bacteria</taxon>
        <taxon>Pseudomonadati</taxon>
        <taxon>Spirochaetota</taxon>
        <taxon>Spirochaetia</taxon>
        <taxon>Leptospirales</taxon>
        <taxon>Leptospiraceae</taxon>
        <taxon>Leptospira</taxon>
    </lineage>
</organism>
<reference key="1">
    <citation type="journal article" date="2008" name="PLoS ONE">
        <title>Genome sequence of the saprophyte Leptospira biflexa provides insights into the evolution of Leptospira and the pathogenesis of leptospirosis.</title>
        <authorList>
            <person name="Picardeau M."/>
            <person name="Bulach D.M."/>
            <person name="Bouchier C."/>
            <person name="Zuerner R.L."/>
            <person name="Zidane N."/>
            <person name="Wilson P.J."/>
            <person name="Creno S."/>
            <person name="Kuczek E.S."/>
            <person name="Bommezzadri S."/>
            <person name="Davis J.C."/>
            <person name="McGrath A."/>
            <person name="Johnson M.J."/>
            <person name="Boursaux-Eude C."/>
            <person name="Seemann T."/>
            <person name="Rouy Z."/>
            <person name="Coppel R.L."/>
            <person name="Rood J.I."/>
            <person name="Lajus A."/>
            <person name="Davies J.K."/>
            <person name="Medigue C."/>
            <person name="Adler B."/>
        </authorList>
    </citation>
    <scope>NUCLEOTIDE SEQUENCE [LARGE SCALE GENOMIC DNA]</scope>
    <source>
        <strain>Patoc 1 / ATCC 23582 / Paris</strain>
    </source>
</reference>
<accession>B0SMC0</accession>
<evidence type="ECO:0000255" key="1">
    <source>
        <dbReference type="HAMAP-Rule" id="MF_00409"/>
    </source>
</evidence>
<protein>
    <recommendedName>
        <fullName evidence="1">Tetraacyldisaccharide 4'-kinase</fullName>
        <ecNumber evidence="1">2.7.1.130</ecNumber>
    </recommendedName>
    <alternativeName>
        <fullName evidence="1">Lipid A 4'-kinase</fullName>
    </alternativeName>
</protein>
<keyword id="KW-0067">ATP-binding</keyword>
<keyword id="KW-0418">Kinase</keyword>
<keyword id="KW-0441">Lipid A biosynthesis</keyword>
<keyword id="KW-0444">Lipid biosynthesis</keyword>
<keyword id="KW-0443">Lipid metabolism</keyword>
<keyword id="KW-0547">Nucleotide-binding</keyword>
<keyword id="KW-1185">Reference proteome</keyword>
<keyword id="KW-0808">Transferase</keyword>
<feature type="chain" id="PRO_1000123722" description="Tetraacyldisaccharide 4'-kinase">
    <location>
        <begin position="1"/>
        <end position="374"/>
    </location>
</feature>
<feature type="binding site" evidence="1">
    <location>
        <begin position="43"/>
        <end position="50"/>
    </location>
    <ligand>
        <name>ATP</name>
        <dbReference type="ChEBI" id="CHEBI:30616"/>
    </ligand>
</feature>
<proteinExistence type="inferred from homology"/>
<gene>
    <name evidence="1" type="primary">lpxK</name>
    <name type="ordered locus">LEPBI_I0940</name>
</gene>
<name>LPXK_LEPBP</name>